<keyword id="KW-0131">Cell cycle</keyword>
<keyword id="KW-0227">DNA damage</keyword>
<keyword id="KW-0234">DNA repair</keyword>
<keyword id="KW-0236">DNA replication inhibitor</keyword>
<keyword id="KW-0469">Meiosis</keyword>
<keyword id="KW-0539">Nucleus</keyword>
<keyword id="KW-1185">Reference proteome</keyword>
<reference key="1">
    <citation type="journal article" date="2009" name="Nature">
        <title>Evolution of pathogenicity and sexual reproduction in eight Candida genomes.</title>
        <authorList>
            <person name="Butler G."/>
            <person name="Rasmussen M.D."/>
            <person name="Lin M.F."/>
            <person name="Santos M.A.S."/>
            <person name="Sakthikumar S."/>
            <person name="Munro C.A."/>
            <person name="Rheinbay E."/>
            <person name="Grabherr M."/>
            <person name="Forche A."/>
            <person name="Reedy J.L."/>
            <person name="Agrafioti I."/>
            <person name="Arnaud M.B."/>
            <person name="Bates S."/>
            <person name="Brown A.J.P."/>
            <person name="Brunke S."/>
            <person name="Costanzo M.C."/>
            <person name="Fitzpatrick D.A."/>
            <person name="de Groot P.W.J."/>
            <person name="Harris D."/>
            <person name="Hoyer L.L."/>
            <person name="Hube B."/>
            <person name="Klis F.M."/>
            <person name="Kodira C."/>
            <person name="Lennard N."/>
            <person name="Logue M.E."/>
            <person name="Martin R."/>
            <person name="Neiman A.M."/>
            <person name="Nikolaou E."/>
            <person name="Quail M.A."/>
            <person name="Quinn J."/>
            <person name="Santos M.C."/>
            <person name="Schmitzberger F.F."/>
            <person name="Sherlock G."/>
            <person name="Shah P."/>
            <person name="Silverstein K.A.T."/>
            <person name="Skrzypek M.S."/>
            <person name="Soll D."/>
            <person name="Staggs R."/>
            <person name="Stansfield I."/>
            <person name="Stumpf M.P.H."/>
            <person name="Sudbery P.E."/>
            <person name="Srikantha T."/>
            <person name="Zeng Q."/>
            <person name="Berman J."/>
            <person name="Berriman M."/>
            <person name="Heitman J."/>
            <person name="Gow N.A.R."/>
            <person name="Lorenz M.C."/>
            <person name="Birren B.W."/>
            <person name="Kellis M."/>
            <person name="Cuomo C.A."/>
        </authorList>
    </citation>
    <scope>NUCLEOTIDE SEQUENCE [LARGE SCALE GENOMIC DNA]</scope>
    <source>
        <strain>ATCC 6260 / CBS 566 / DSM 6381 / JCM 1539 / NBRC 10279 / NRRL Y-324</strain>
    </source>
</reference>
<sequence>MSDDVLGLDQPIKLTKRTKISKIDLDGLMDKQKGLPFIISSYRKPLRVIERNDQRLAAKLEKKDLTSSQRRRLKYDNEFQNLQAILQFYQLWCHGLLPKAKFRDCIYLLRSFGARDTSLKRYRKTLIEAEINKKKEELGLAVPSEQPSTTQEYSKSEQRVNEPDDFFSEDEFYADPQDENLFVRPEVPHLEDIPNESYDAEMELLREMDS</sequence>
<feature type="chain" id="PRO_0000301724" description="Chromosome segregation in meiosis protein 3">
    <location>
        <begin position="1"/>
        <end position="210"/>
    </location>
</feature>
<feature type="region of interest" description="Disordered" evidence="2">
    <location>
        <begin position="142"/>
        <end position="162"/>
    </location>
</feature>
<evidence type="ECO:0000250" key="1"/>
<evidence type="ECO:0000256" key="2">
    <source>
        <dbReference type="SAM" id="MobiDB-lite"/>
    </source>
</evidence>
<evidence type="ECO:0000305" key="3"/>
<name>CSM3_PICGU</name>
<proteinExistence type="inferred from homology"/>
<comment type="function">
    <text evidence="1">Forms a fork protection complex (FPC) with TOF1 and which is required for chromosome segregation during meiosis and DNA damage repair. FPC coordinates leading and lagging strand synthesis and moves with the replication fork. FPC stabilizes replication forks in a configuration that is recognized by replication checkpoint sensors (By similarity).</text>
</comment>
<comment type="subunit">
    <text evidence="1">Component of the fork protection complex (FPC) consisting of TOF1 and CSM3.</text>
</comment>
<comment type="subcellular location">
    <subcellularLocation>
        <location evidence="1">Nucleus</location>
    </subcellularLocation>
</comment>
<comment type="similarity">
    <text evidence="3">Belongs to the CSM3 family.</text>
</comment>
<dbReference type="EMBL" id="CH408156">
    <property type="protein sequence ID" value="EDK37231.2"/>
    <property type="molecule type" value="Genomic_DNA"/>
</dbReference>
<dbReference type="RefSeq" id="XP_001485658.1">
    <property type="nucleotide sequence ID" value="XM_001485608.1"/>
</dbReference>
<dbReference type="SMR" id="A5DDH8"/>
<dbReference type="STRING" id="294746.A5DDH8"/>
<dbReference type="GeneID" id="5128055"/>
<dbReference type="KEGG" id="pgu:PGUG_01329"/>
<dbReference type="VEuPathDB" id="FungiDB:PGUG_01329"/>
<dbReference type="eggNOG" id="KOG3004">
    <property type="taxonomic scope" value="Eukaryota"/>
</dbReference>
<dbReference type="HOGENOM" id="CLU_1310540_0_0_1"/>
<dbReference type="InParanoid" id="A5DDH8"/>
<dbReference type="OrthoDB" id="437078at2759"/>
<dbReference type="Proteomes" id="UP000001997">
    <property type="component" value="Unassembled WGS sequence"/>
</dbReference>
<dbReference type="GO" id="GO:0031298">
    <property type="term" value="C:replication fork protection complex"/>
    <property type="evidence" value="ECO:0007669"/>
    <property type="project" value="TreeGrafter"/>
</dbReference>
<dbReference type="GO" id="GO:0003677">
    <property type="term" value="F:DNA binding"/>
    <property type="evidence" value="ECO:0007669"/>
    <property type="project" value="TreeGrafter"/>
</dbReference>
<dbReference type="GO" id="GO:0006281">
    <property type="term" value="P:DNA repair"/>
    <property type="evidence" value="ECO:0007669"/>
    <property type="project" value="UniProtKB-KW"/>
</dbReference>
<dbReference type="GO" id="GO:0000076">
    <property type="term" value="P:DNA replication checkpoint signaling"/>
    <property type="evidence" value="ECO:0007669"/>
    <property type="project" value="InterPro"/>
</dbReference>
<dbReference type="GO" id="GO:0051321">
    <property type="term" value="P:meiotic cell cycle"/>
    <property type="evidence" value="ECO:0007669"/>
    <property type="project" value="UniProtKB-KW"/>
</dbReference>
<dbReference type="GO" id="GO:0043111">
    <property type="term" value="P:replication fork arrest"/>
    <property type="evidence" value="ECO:0007669"/>
    <property type="project" value="TreeGrafter"/>
</dbReference>
<dbReference type="GO" id="GO:0031297">
    <property type="term" value="P:replication fork processing"/>
    <property type="evidence" value="ECO:0007669"/>
    <property type="project" value="InterPro"/>
</dbReference>
<dbReference type="InterPro" id="IPR012923">
    <property type="entry name" value="Csm3"/>
</dbReference>
<dbReference type="InterPro" id="IPR040038">
    <property type="entry name" value="TIPIN/Csm3/Swi3"/>
</dbReference>
<dbReference type="PANTHER" id="PTHR13220">
    <property type="entry name" value="TIMELESS INTERACTING-RELATED"/>
    <property type="match status" value="1"/>
</dbReference>
<dbReference type="PANTHER" id="PTHR13220:SF11">
    <property type="entry name" value="TIMELESS-INTERACTING PROTEIN"/>
    <property type="match status" value="1"/>
</dbReference>
<dbReference type="Pfam" id="PF07962">
    <property type="entry name" value="Swi3"/>
    <property type="match status" value="1"/>
</dbReference>
<organism>
    <name type="scientific">Meyerozyma guilliermondii (strain ATCC 6260 / CBS 566 / DSM 6381 / JCM 1539 / NBRC 10279 / NRRL Y-324)</name>
    <name type="common">Yeast</name>
    <name type="synonym">Candida guilliermondii</name>
    <dbReference type="NCBI Taxonomy" id="294746"/>
    <lineage>
        <taxon>Eukaryota</taxon>
        <taxon>Fungi</taxon>
        <taxon>Dikarya</taxon>
        <taxon>Ascomycota</taxon>
        <taxon>Saccharomycotina</taxon>
        <taxon>Pichiomycetes</taxon>
        <taxon>Debaryomycetaceae</taxon>
        <taxon>Meyerozyma</taxon>
    </lineage>
</organism>
<gene>
    <name type="primary">CSM3</name>
    <name type="ORF">PGUG_01329</name>
</gene>
<accession>A5DDH8</accession>
<protein>
    <recommendedName>
        <fullName>Chromosome segregation in meiosis protein 3</fullName>
    </recommendedName>
</protein>